<accession>Q97AR1</accession>
<reference key="1">
    <citation type="journal article" date="2000" name="Proc. Natl. Acad. Sci. U.S.A.">
        <title>Archaeal adaptation to higher temperatures revealed by genomic sequence of Thermoplasma volcanium.</title>
        <authorList>
            <person name="Kawashima T."/>
            <person name="Amano N."/>
            <person name="Koike H."/>
            <person name="Makino S."/>
            <person name="Higuchi S."/>
            <person name="Kawashima-Ohya Y."/>
            <person name="Watanabe K."/>
            <person name="Yamazaki M."/>
            <person name="Kanehori K."/>
            <person name="Kawamoto T."/>
            <person name="Nunoshiba T."/>
            <person name="Yamamoto Y."/>
            <person name="Aramaki H."/>
            <person name="Makino K."/>
            <person name="Suzuki M."/>
        </authorList>
    </citation>
    <scope>NUCLEOTIDE SEQUENCE [LARGE SCALE GENOMIC DNA]</scope>
    <source>
        <strain>ATCC 51530 / DSM 4299 / JCM 9571 / NBRC 15438 / GSS1</strain>
    </source>
</reference>
<comment type="function">
    <text evidence="1">Has nucleotide phosphatase activity towards ATP, GTP, CTP, TTP and UTP. May hydrolyze nucleoside diphosphates with lower efficiency.</text>
</comment>
<comment type="catalytic activity">
    <reaction evidence="1">
        <text>a ribonucleoside 5'-triphosphate + H2O = a ribonucleoside 5'-diphosphate + phosphate + H(+)</text>
        <dbReference type="Rhea" id="RHEA:23680"/>
        <dbReference type="ChEBI" id="CHEBI:15377"/>
        <dbReference type="ChEBI" id="CHEBI:15378"/>
        <dbReference type="ChEBI" id="CHEBI:43474"/>
        <dbReference type="ChEBI" id="CHEBI:57930"/>
        <dbReference type="ChEBI" id="CHEBI:61557"/>
        <dbReference type="EC" id="3.6.1.15"/>
    </reaction>
</comment>
<comment type="similarity">
    <text evidence="1">Belongs to the THEP1 NTPase family.</text>
</comment>
<sequence length="178" mass="19779">MAIKIGITGPVGSIKAEALQKIIGMLQNDGLNVQGVLISKVSDDGKLTGYTIEDILTKKKVQFCDEKFVSRVKIDKLGVDTRLLEEILIPSLQKARESADVIIIDEVGKLENTTKKIHSEIEETLKCGKPLIVTLHKRSRNPVLQEIKSLEGVRVFDITPINKNILPFKVMHVLKGEE</sequence>
<feature type="chain" id="PRO_0000146708" description="Nucleoside-triphosphatase THEP1">
    <location>
        <begin position="1"/>
        <end position="178"/>
    </location>
</feature>
<feature type="binding site" evidence="1">
    <location>
        <begin position="9"/>
        <end position="16"/>
    </location>
    <ligand>
        <name>ATP</name>
        <dbReference type="ChEBI" id="CHEBI:30616"/>
    </ligand>
</feature>
<feature type="binding site" evidence="1">
    <location>
        <begin position="101"/>
        <end position="108"/>
    </location>
    <ligand>
        <name>ATP</name>
        <dbReference type="ChEBI" id="CHEBI:30616"/>
    </ligand>
</feature>
<evidence type="ECO:0000255" key="1">
    <source>
        <dbReference type="HAMAP-Rule" id="MF_00796"/>
    </source>
</evidence>
<protein>
    <recommendedName>
        <fullName evidence="1">Nucleoside-triphosphatase THEP1</fullName>
        <shortName evidence="1">NTPase THEP1</shortName>
        <ecNumber evidence="1">3.6.1.15</ecNumber>
    </recommendedName>
    <alternativeName>
        <fullName evidence="1">Nucleoside triphosphate phosphohydrolase</fullName>
    </alternativeName>
</protein>
<organism>
    <name type="scientific">Thermoplasma volcanium (strain ATCC 51530 / DSM 4299 / JCM 9571 / NBRC 15438 / GSS1)</name>
    <dbReference type="NCBI Taxonomy" id="273116"/>
    <lineage>
        <taxon>Archaea</taxon>
        <taxon>Methanobacteriati</taxon>
        <taxon>Thermoplasmatota</taxon>
        <taxon>Thermoplasmata</taxon>
        <taxon>Thermoplasmatales</taxon>
        <taxon>Thermoplasmataceae</taxon>
        <taxon>Thermoplasma</taxon>
    </lineage>
</organism>
<name>NTPTH_THEVO</name>
<gene>
    <name type="ordered locus">TV0748</name>
    <name type="ORF">TVG0753265</name>
</gene>
<proteinExistence type="inferred from homology"/>
<dbReference type="EC" id="3.6.1.15" evidence="1"/>
<dbReference type="EMBL" id="BA000011">
    <property type="protein sequence ID" value="BAB59890.1"/>
    <property type="molecule type" value="Genomic_DNA"/>
</dbReference>
<dbReference type="SMR" id="Q97AR1"/>
<dbReference type="STRING" id="273116.gene:9381538"/>
<dbReference type="PaxDb" id="273116-14324964"/>
<dbReference type="KEGG" id="tvo:TVG0753265"/>
<dbReference type="eggNOG" id="arCOG01034">
    <property type="taxonomic scope" value="Archaea"/>
</dbReference>
<dbReference type="HOGENOM" id="CLU_103145_1_1_2"/>
<dbReference type="PhylomeDB" id="Q97AR1"/>
<dbReference type="Proteomes" id="UP000001017">
    <property type="component" value="Chromosome"/>
</dbReference>
<dbReference type="GO" id="GO:0005524">
    <property type="term" value="F:ATP binding"/>
    <property type="evidence" value="ECO:0007669"/>
    <property type="project" value="UniProtKB-UniRule"/>
</dbReference>
<dbReference type="GO" id="GO:0017111">
    <property type="term" value="F:ribonucleoside triphosphate phosphatase activity"/>
    <property type="evidence" value="ECO:0007669"/>
    <property type="project" value="UniProtKB-UniRule"/>
</dbReference>
<dbReference type="CDD" id="cd19482">
    <property type="entry name" value="RecA-like_Thep1"/>
    <property type="match status" value="1"/>
</dbReference>
<dbReference type="Gene3D" id="3.40.50.300">
    <property type="entry name" value="P-loop containing nucleotide triphosphate hydrolases"/>
    <property type="match status" value="1"/>
</dbReference>
<dbReference type="HAMAP" id="MF_00796">
    <property type="entry name" value="NTPase_1"/>
    <property type="match status" value="1"/>
</dbReference>
<dbReference type="InterPro" id="IPR004948">
    <property type="entry name" value="Nuc-triphosphatase_THEP1"/>
</dbReference>
<dbReference type="InterPro" id="IPR027417">
    <property type="entry name" value="P-loop_NTPase"/>
</dbReference>
<dbReference type="NCBIfam" id="NF010248">
    <property type="entry name" value="PRK13695.1"/>
    <property type="match status" value="1"/>
</dbReference>
<dbReference type="PANTHER" id="PTHR43146">
    <property type="entry name" value="CANCER-RELATED NUCLEOSIDE-TRIPHOSPHATASE"/>
    <property type="match status" value="1"/>
</dbReference>
<dbReference type="PANTHER" id="PTHR43146:SF1">
    <property type="entry name" value="CANCER-RELATED NUCLEOSIDE-TRIPHOSPHATASE"/>
    <property type="match status" value="1"/>
</dbReference>
<dbReference type="Pfam" id="PF03266">
    <property type="entry name" value="NTPase_1"/>
    <property type="match status" value="1"/>
</dbReference>
<dbReference type="SUPFAM" id="SSF52540">
    <property type="entry name" value="P-loop containing nucleoside triphosphate hydrolases"/>
    <property type="match status" value="1"/>
</dbReference>
<keyword id="KW-0067">ATP-binding</keyword>
<keyword id="KW-0378">Hydrolase</keyword>
<keyword id="KW-0547">Nucleotide-binding</keyword>